<reference key="1">
    <citation type="journal article" date="2017" name="J. Am. Chem. Soc.">
        <title>Enzyme-catalyzed intramolecular enantioselective hydroalkoxylation.</title>
        <authorList>
            <person name="Gao S.S."/>
            <person name="Garcia-Borras M."/>
            <person name="Barber J.S."/>
            <person name="Hai Y."/>
            <person name="Duan A."/>
            <person name="Garg N.K."/>
            <person name="Houk K.N."/>
            <person name="Tang Y."/>
        </authorList>
    </citation>
    <scope>NUCLEOTIDE SEQUENCE [MRNA]</scope>
    <scope>FUNCTION</scope>
    <scope>CATALYTIC ACTIVITY</scope>
    <scope>BIOPHYSICOCHEMICAL PROPERTIES</scope>
    <scope>PATHWAY</scope>
    <source>
        <strain>ATCC 10118 / CBS 336.48 / NBRC 31747 / NRRL 1040</strain>
    </source>
</reference>
<reference key="2">
    <citation type="journal article" date="2016" name="J. Am. Chem. Soc.">
        <title>Phenalenone polyketide cyclization catalyzed by fungal polyketide synthase and flavin-dependent monooxygenase.</title>
        <authorList>
            <person name="Gao S.S."/>
            <person name="Duan A."/>
            <person name="Xu W."/>
            <person name="Yu P."/>
            <person name="Hang L."/>
            <person name="Houk K.N."/>
            <person name="Tang Y."/>
        </authorList>
    </citation>
    <scope>FUNCTION</scope>
</reference>
<reference evidence="8 9" key="3">
    <citation type="journal article" date="2019" name="Biochem. Biophys. Res. Commun.">
        <title>Crystal structure and proposed mechanism of an enantioselective hydroalkoxylation enzyme from Penicillium herquei.</title>
        <authorList>
            <person name="Feng Y."/>
            <person name="Yu X."/>
            <person name="Huang J.W."/>
            <person name="Liu W."/>
            <person name="Li Q."/>
            <person name="Hu Y."/>
            <person name="Yang Y."/>
            <person name="Chen Y."/>
            <person name="Jin J."/>
            <person name="Li H."/>
            <person name="Chen C.C."/>
            <person name="Guo R.T."/>
        </authorList>
    </citation>
    <scope>X-RAY CRYSTALLOGRAPHY (1.33 ANGSTROMS)</scope>
    <scope>SUBUNIT</scope>
    <scope>DOMAIN</scope>
    <scope>MUTAGENESIS OF GLU-104</scope>
</reference>
<gene>
    <name evidence="7" type="primary">phnH</name>
</gene>
<feature type="signal peptide" evidence="1">
    <location>
        <begin position="1"/>
        <end position="18"/>
    </location>
</feature>
<feature type="chain" id="PRO_5013249856" description="Hydroalkoxylation enzyme phnH">
    <location>
        <begin position="19"/>
        <end position="149"/>
    </location>
</feature>
<feature type="glycosylation site" description="N-linked (GlcNAc...) asparagine" evidence="2">
    <location>
        <position position="33"/>
    </location>
</feature>
<feature type="glycosylation site" description="N-linked (GlcNAc...) asparagine" evidence="2">
    <location>
        <position position="127"/>
    </location>
</feature>
<feature type="mutagenesis site" description="Exhibits 40% activity." evidence="5">
    <original>E</original>
    <variation>A</variation>
    <location>
        <position position="104"/>
    </location>
</feature>
<feature type="strand" evidence="10">
    <location>
        <begin position="25"/>
        <end position="36"/>
    </location>
</feature>
<feature type="strand" evidence="10">
    <location>
        <begin position="40"/>
        <end position="45"/>
    </location>
</feature>
<feature type="strand" evidence="10">
    <location>
        <begin position="48"/>
        <end position="61"/>
    </location>
</feature>
<feature type="strand" evidence="10">
    <location>
        <begin position="66"/>
        <end position="79"/>
    </location>
</feature>
<feature type="strand" evidence="10">
    <location>
        <begin position="84"/>
        <end position="94"/>
    </location>
</feature>
<feature type="strand" evidence="10">
    <location>
        <begin position="99"/>
        <end position="107"/>
    </location>
</feature>
<feature type="strand" evidence="10">
    <location>
        <begin position="110"/>
        <end position="116"/>
    </location>
</feature>
<feature type="turn" evidence="10">
    <location>
        <begin position="120"/>
        <end position="122"/>
    </location>
</feature>
<feature type="helix" evidence="10">
    <location>
        <begin position="123"/>
        <end position="127"/>
    </location>
</feature>
<feature type="strand" evidence="10">
    <location>
        <begin position="130"/>
        <end position="133"/>
    </location>
</feature>
<feature type="strand" evidence="10">
    <location>
        <begin position="142"/>
        <end position="149"/>
    </location>
</feature>
<dbReference type="EC" id="4.-.-.-" evidence="4"/>
<dbReference type="EMBL" id="KY475538">
    <property type="protein sequence ID" value="AQV03780.1"/>
    <property type="molecule type" value="mRNA"/>
</dbReference>
<dbReference type="PDB" id="6JJS">
    <property type="method" value="X-ray"/>
    <property type="resolution" value="1.62 A"/>
    <property type="chains" value="A=1-149"/>
</dbReference>
<dbReference type="PDB" id="6JJT">
    <property type="method" value="X-ray"/>
    <property type="resolution" value="1.33 A"/>
    <property type="chains" value="A/B/C/D=1-149"/>
</dbReference>
<dbReference type="PDBsum" id="6JJS"/>
<dbReference type="PDBsum" id="6JJT"/>
<dbReference type="SMR" id="A0A1S6PUA4"/>
<dbReference type="GlyCosmos" id="A0A1S6PUA4">
    <property type="glycosylation" value="2 sites, No reported glycans"/>
</dbReference>
<dbReference type="SABIO-RK" id="A0A1S6PUA4"/>
<dbReference type="GO" id="GO:0016829">
    <property type="term" value="F:lyase activity"/>
    <property type="evidence" value="ECO:0007669"/>
    <property type="project" value="UniProtKB-KW"/>
</dbReference>
<dbReference type="Gene3D" id="2.40.160.20">
    <property type="match status" value="1"/>
</dbReference>
<dbReference type="Pfam" id="PF11578">
    <property type="entry name" value="DUF3237"/>
    <property type="match status" value="1"/>
</dbReference>
<proteinExistence type="evidence at protein level"/>
<evidence type="ECO:0000255" key="1"/>
<evidence type="ECO:0000255" key="2">
    <source>
        <dbReference type="PROSITE-ProRule" id="PRU00498"/>
    </source>
</evidence>
<evidence type="ECO:0000269" key="3">
    <source>
    </source>
</evidence>
<evidence type="ECO:0000269" key="4">
    <source>
    </source>
</evidence>
<evidence type="ECO:0000269" key="5">
    <source>
    </source>
</evidence>
<evidence type="ECO:0000303" key="6">
    <source>
    </source>
</evidence>
<evidence type="ECO:0000303" key="7">
    <source>
    </source>
</evidence>
<evidence type="ECO:0007744" key="8">
    <source>
        <dbReference type="PDB" id="6JJS"/>
    </source>
</evidence>
<evidence type="ECO:0007744" key="9">
    <source>
        <dbReference type="PDB" id="6JJT"/>
    </source>
</evidence>
<evidence type="ECO:0007829" key="10">
    <source>
        <dbReference type="PDB" id="6JJT"/>
    </source>
</evidence>
<keyword id="KW-0002">3D-structure</keyword>
<keyword id="KW-0325">Glycoprotein</keyword>
<keyword id="KW-0456">Lyase</keyword>
<keyword id="KW-0732">Signal</keyword>
<comment type="function">
    <text evidence="3 4">Hydroalkoxylation enzyme; part of the gene cluster that mediates the biosynthesis of phenalenones such as herqueinone, compounds that have been reported to treat tumors, bacterial infections and/or mycoses, and rheumatic diseases (PubMed:26978228). The non-reducing polyketide synthase phnA synthesizes the heptaketide backbone and cyclizes it into the angular, hemiketal-containing naphtho-gamma-pyrone prephenalenone. The product template (PT) domain of phnA catalyzes only the C4-C9 aldol condensation, which is unprecedented among known PT domains (PubMed:26978228, PubMed:28240554). The transformation of prephenalenone to phenalenones requires an FAD-dependent monooxygenase phnB, which catalyzes the C2 aromatic hydroxylation of prephenalenone and ring opening of the gamma-pyrone ring simultaneously (PubMed:26978228, PubMed:28240554). Subsequent intramolecular deprotonation of C3 phenolic oxygen accelerates phenalenone ring closure to yield the tricyclic phenalenone core with a C2 hydroxylation (PubMed:26978228, PubMed:28240554). The prenyltransferase phnF further catalyzes reverse C-prenylation of phenalenone by direct electrophilic substitution at C6, or possibly via first a forward O-prenylation of a neighboring phenol in phenalenone, followed by a Claisen rearrangement (PubMed:28240554). The hydroalkoxylation enzyme phnH catalyzes the 5-exo-trig cyclization via acid catalysis after the spontaneous deprotonation of 7-OH, which leads to the formation of the dihydrobenzofuran atrovenetin (PubMed:28240554). Atrovenetin is further converted to deoxyherqueinone by the O-methyltransferase phnC which can methylate C2-OH to stabilize the northern portion of the phenalenone core (PubMed:28240554). Finally, the oxidoreductase phnG converts deoxyherqueinone to herqueinone via C6 hydroxylation (PubMed:28240554).</text>
</comment>
<comment type="catalytic activity">
    <reaction evidence="4">
        <text>2,4,7,9-tetrahydroxy-6-methyl-8-(2-methylbut-3-en-2-yl)-1-oxo-1H-phenalen-3-ol = (2'R)-atrovenetin</text>
        <dbReference type="Rhea" id="RHEA:62660"/>
        <dbReference type="ChEBI" id="CHEBI:145870"/>
        <dbReference type="ChEBI" id="CHEBI:145872"/>
    </reaction>
    <physiologicalReaction direction="left-to-right" evidence="4">
        <dbReference type="Rhea" id="RHEA:62661"/>
    </physiologicalReaction>
</comment>
<comment type="biophysicochemical properties">
    <kinetics>
        <KM evidence="4">216 uM for the atrovenetin precursor</KM>
    </kinetics>
    <phDependence>
        <text evidence="4">Optimum pH is 7.5.</text>
    </phDependence>
</comment>
<comment type="pathway">
    <text evidence="4">Secondary metabolite biosynthesis.</text>
</comment>
<comment type="subunit">
    <text evidence="5">Homotetramer.</text>
</comment>
<comment type="domain">
    <text evidence="5">The extensive N-terminal loop participates in forming interface between the subunits of the homotetramer.</text>
</comment>
<accession>A0A1S6PUA4</accession>
<sequence length="149" mass="16038">MKFTYLVSLAAFAVTALGSRPTPPNLEFLFSANLTKGPAYIYDQSDAQIKALQTLTGGIIAGPNFDGTVIGGTALSTRGADGTIRADAHYLIQTSDGANILVTESAAIPYVAVLFDTSSEKYNWLNNVTAWGTPPNLNEINFLEYWQIE</sequence>
<organism>
    <name type="scientific">Penicillium herquei</name>
    <dbReference type="NCBI Taxonomy" id="69774"/>
    <lineage>
        <taxon>Eukaryota</taxon>
        <taxon>Fungi</taxon>
        <taxon>Dikarya</taxon>
        <taxon>Ascomycota</taxon>
        <taxon>Pezizomycotina</taxon>
        <taxon>Eurotiomycetes</taxon>
        <taxon>Eurotiomycetidae</taxon>
        <taxon>Eurotiales</taxon>
        <taxon>Aspergillaceae</taxon>
        <taxon>Penicillium</taxon>
    </lineage>
</organism>
<name>PHNH_PENHR</name>
<protein>
    <recommendedName>
        <fullName evidence="6">Hydroalkoxylation enzyme phnH</fullName>
        <ecNumber evidence="4">4.-.-.-</ecNumber>
    </recommendedName>
    <alternativeName>
        <fullName evidence="6">Phenalenone biosynthesis cluster protein H</fullName>
    </alternativeName>
</protein>